<feature type="chain" id="PRO_0000061291" description="Cytochrome b">
    <location>
        <begin position="1"/>
        <end position="380"/>
    </location>
</feature>
<feature type="transmembrane region" description="Helical" evidence="2">
    <location>
        <begin position="34"/>
        <end position="54"/>
    </location>
</feature>
<feature type="transmembrane region" description="Helical" evidence="2">
    <location>
        <begin position="78"/>
        <end position="99"/>
    </location>
</feature>
<feature type="transmembrane region" description="Helical" evidence="2">
    <location>
        <begin position="114"/>
        <end position="134"/>
    </location>
</feature>
<feature type="transmembrane region" description="Helical" evidence="2">
    <location>
        <begin position="179"/>
        <end position="199"/>
    </location>
</feature>
<feature type="transmembrane region" description="Helical" evidence="2">
    <location>
        <begin position="227"/>
        <end position="247"/>
    </location>
</feature>
<feature type="transmembrane region" description="Helical" evidence="2">
    <location>
        <begin position="289"/>
        <end position="309"/>
    </location>
</feature>
<feature type="transmembrane region" description="Helical" evidence="2">
    <location>
        <begin position="321"/>
        <end position="341"/>
    </location>
</feature>
<feature type="transmembrane region" description="Helical" evidence="2">
    <location>
        <begin position="348"/>
        <end position="368"/>
    </location>
</feature>
<feature type="binding site" description="axial binding residue" evidence="2">
    <location>
        <position position="84"/>
    </location>
    <ligand>
        <name>heme b</name>
        <dbReference type="ChEBI" id="CHEBI:60344"/>
        <label>b562</label>
    </ligand>
    <ligandPart>
        <name>Fe</name>
        <dbReference type="ChEBI" id="CHEBI:18248"/>
    </ligandPart>
</feature>
<feature type="binding site" description="axial binding residue" evidence="2">
    <location>
        <position position="98"/>
    </location>
    <ligand>
        <name>heme b</name>
        <dbReference type="ChEBI" id="CHEBI:60344"/>
        <label>b566</label>
    </ligand>
    <ligandPart>
        <name>Fe</name>
        <dbReference type="ChEBI" id="CHEBI:18248"/>
    </ligandPart>
</feature>
<feature type="binding site" description="axial binding residue" evidence="2">
    <location>
        <position position="183"/>
    </location>
    <ligand>
        <name>heme b</name>
        <dbReference type="ChEBI" id="CHEBI:60344"/>
        <label>b562</label>
    </ligand>
    <ligandPart>
        <name>Fe</name>
        <dbReference type="ChEBI" id="CHEBI:18248"/>
    </ligandPart>
</feature>
<feature type="binding site" description="axial binding residue" evidence="2">
    <location>
        <position position="197"/>
    </location>
    <ligand>
        <name>heme b</name>
        <dbReference type="ChEBI" id="CHEBI:60344"/>
        <label>b566</label>
    </ligand>
    <ligandPart>
        <name>Fe</name>
        <dbReference type="ChEBI" id="CHEBI:18248"/>
    </ligandPart>
</feature>
<feature type="binding site" evidence="2">
    <location>
        <position position="202"/>
    </location>
    <ligand>
        <name>a ubiquinone</name>
        <dbReference type="ChEBI" id="CHEBI:16389"/>
    </ligand>
</feature>
<accession>O79210</accession>
<comment type="function">
    <text evidence="2">Component of the ubiquinol-cytochrome c reductase complex (complex III or cytochrome b-c1 complex) that is part of the mitochondrial respiratory chain. The b-c1 complex mediates electron transfer from ubiquinol to cytochrome c. Contributes to the generation of a proton gradient across the mitochondrial membrane that is then used for ATP synthesis.</text>
</comment>
<comment type="cofactor">
    <cofactor evidence="2">
        <name>heme b</name>
        <dbReference type="ChEBI" id="CHEBI:60344"/>
    </cofactor>
    <text evidence="2">Binds 2 heme b groups non-covalently.</text>
</comment>
<comment type="subunit">
    <text evidence="2">The cytochrome bc1 complex contains 11 subunits: 3 respiratory subunits (MT-CYB, CYC1 and UQCRFS1), 2 core proteins (UQCRC1 and UQCRC2) and 6 low-molecular weight proteins (UQCRH/QCR6, UQCRB/QCR7, UQCRQ/QCR8, UQCR10/QCR9, UQCR11/QCR10 and a cleavage product of UQCRFS1). This cytochrome bc1 complex then forms a dimer.</text>
</comment>
<comment type="subcellular location">
    <subcellularLocation>
        <location evidence="2">Mitochondrion inner membrane</location>
        <topology evidence="2">Multi-pass membrane protein</topology>
    </subcellularLocation>
</comment>
<comment type="miscellaneous">
    <text evidence="1">Heme 1 (or BL or b562) is low-potential and absorbs at about 562 nm, and heme 2 (or BH or b566) is high-potential and absorbs at about 566 nm.</text>
</comment>
<comment type="similarity">
    <text evidence="3 4">Belongs to the cytochrome b family.</text>
</comment>
<comment type="caution">
    <text evidence="2">The full-length protein contains only eight transmembrane helices, not nine as predicted by bioinformatics tools.</text>
</comment>
<keyword id="KW-0249">Electron transport</keyword>
<keyword id="KW-0349">Heme</keyword>
<keyword id="KW-0408">Iron</keyword>
<keyword id="KW-0472">Membrane</keyword>
<keyword id="KW-0479">Metal-binding</keyword>
<keyword id="KW-0496">Mitochondrion</keyword>
<keyword id="KW-0999">Mitochondrion inner membrane</keyword>
<keyword id="KW-0679">Respiratory chain</keyword>
<keyword id="KW-0812">Transmembrane</keyword>
<keyword id="KW-1133">Transmembrane helix</keyword>
<keyword id="KW-0813">Transport</keyword>
<keyword id="KW-0830">Ubiquinone</keyword>
<sequence>MAPNPRKSHPLLKMINNSLIDLPTPPNISAWWNFGSLLALCLMTQILTGLLLAMHYTADTTLAFSSVAHTCRNVQYGWLIRNMHANGASFFFICIYMHIGRGFYYGSYLHKETWNTGVLLLLTLMATAFVGYVLPWGQMSFWGATVITNMFSAIPYIGQTIVEWAWGGFSVDNPTLTRFFALHFLLPFMIAGLTLIHLTFLHESGSNNPLGIVSNCDKIPFHPYYSLKDILGLALLLLPLTTMALFSPNLLGDPENFTPANPLVTPPHIKPEWYFLFAYAILRSIPNKLGGVLALAASVLVLFLSPLLHKSKQRTMAFRPLSQLLFWTLVANLFILTWIGSQPVEHPFIIIGQLASTTYFTILLILFPITSALENKMLNF</sequence>
<organism>
    <name type="scientific">Oceanodroma furcata</name>
    <name type="common">Fork-tailed storm-petrel</name>
    <name type="synonym">Hydrobates furcatus</name>
    <dbReference type="NCBI Taxonomy" id="79631"/>
    <lineage>
        <taxon>Eukaryota</taxon>
        <taxon>Metazoa</taxon>
        <taxon>Chordata</taxon>
        <taxon>Craniata</taxon>
        <taxon>Vertebrata</taxon>
        <taxon>Euteleostomi</taxon>
        <taxon>Archelosauria</taxon>
        <taxon>Archosauria</taxon>
        <taxon>Dinosauria</taxon>
        <taxon>Saurischia</taxon>
        <taxon>Theropoda</taxon>
        <taxon>Coelurosauria</taxon>
        <taxon>Aves</taxon>
        <taxon>Neognathae</taxon>
        <taxon>Neoaves</taxon>
        <taxon>Aequornithes</taxon>
        <taxon>Procellariiformes</taxon>
        <taxon>Hydrobatidae</taxon>
        <taxon>Oceanodroma</taxon>
    </lineage>
</organism>
<evidence type="ECO:0000250" key="1"/>
<evidence type="ECO:0000250" key="2">
    <source>
        <dbReference type="UniProtKB" id="P00157"/>
    </source>
</evidence>
<evidence type="ECO:0000255" key="3">
    <source>
        <dbReference type="PROSITE-ProRule" id="PRU00967"/>
    </source>
</evidence>
<evidence type="ECO:0000255" key="4">
    <source>
        <dbReference type="PROSITE-ProRule" id="PRU00968"/>
    </source>
</evidence>
<geneLocation type="mitochondrion"/>
<name>CYB_OCEFU</name>
<proteinExistence type="inferred from homology"/>
<reference key="1">
    <citation type="journal article" date="1998" name="Mol. Biol. Evol.">
        <title>Body size effects and rates of cytochrome-b evolution in tube-nosed seabirds.</title>
        <authorList>
            <person name="Nunn G.B."/>
            <person name="Stanley S.E."/>
        </authorList>
    </citation>
    <scope>NUCLEOTIDE SEQUENCE [GENOMIC DNA]</scope>
    <source>
        <strain>Isolate Ofurc</strain>
    </source>
</reference>
<gene>
    <name type="primary">MT-CYB</name>
    <name type="synonym">COB</name>
    <name type="synonym">CYTB</name>
    <name type="synonym">MTCYB</name>
</gene>
<dbReference type="EMBL" id="AF076063">
    <property type="protein sequence ID" value="AAC68620.1"/>
    <property type="molecule type" value="Genomic_DNA"/>
</dbReference>
<dbReference type="SMR" id="O79210"/>
<dbReference type="GO" id="GO:0005743">
    <property type="term" value="C:mitochondrial inner membrane"/>
    <property type="evidence" value="ECO:0007669"/>
    <property type="project" value="UniProtKB-SubCell"/>
</dbReference>
<dbReference type="GO" id="GO:0045275">
    <property type="term" value="C:respiratory chain complex III"/>
    <property type="evidence" value="ECO:0007669"/>
    <property type="project" value="InterPro"/>
</dbReference>
<dbReference type="GO" id="GO:0046872">
    <property type="term" value="F:metal ion binding"/>
    <property type="evidence" value="ECO:0007669"/>
    <property type="project" value="UniProtKB-KW"/>
</dbReference>
<dbReference type="GO" id="GO:0008121">
    <property type="term" value="F:ubiquinol-cytochrome-c reductase activity"/>
    <property type="evidence" value="ECO:0007669"/>
    <property type="project" value="InterPro"/>
</dbReference>
<dbReference type="GO" id="GO:0006122">
    <property type="term" value="P:mitochondrial electron transport, ubiquinol to cytochrome c"/>
    <property type="evidence" value="ECO:0007669"/>
    <property type="project" value="TreeGrafter"/>
</dbReference>
<dbReference type="CDD" id="cd00290">
    <property type="entry name" value="cytochrome_b_C"/>
    <property type="match status" value="1"/>
</dbReference>
<dbReference type="CDD" id="cd00284">
    <property type="entry name" value="Cytochrome_b_N"/>
    <property type="match status" value="1"/>
</dbReference>
<dbReference type="FunFam" id="1.20.810.10:FF:000002">
    <property type="entry name" value="Cytochrome b"/>
    <property type="match status" value="1"/>
</dbReference>
<dbReference type="Gene3D" id="1.20.810.10">
    <property type="entry name" value="Cytochrome Bc1 Complex, Chain C"/>
    <property type="match status" value="1"/>
</dbReference>
<dbReference type="InterPro" id="IPR005798">
    <property type="entry name" value="Cyt_b/b6_C"/>
</dbReference>
<dbReference type="InterPro" id="IPR036150">
    <property type="entry name" value="Cyt_b/b6_C_sf"/>
</dbReference>
<dbReference type="InterPro" id="IPR005797">
    <property type="entry name" value="Cyt_b/b6_N"/>
</dbReference>
<dbReference type="InterPro" id="IPR027387">
    <property type="entry name" value="Cytb/b6-like_sf"/>
</dbReference>
<dbReference type="InterPro" id="IPR030689">
    <property type="entry name" value="Cytochrome_b"/>
</dbReference>
<dbReference type="InterPro" id="IPR048260">
    <property type="entry name" value="Cytochrome_b_C_euk/bac"/>
</dbReference>
<dbReference type="InterPro" id="IPR048259">
    <property type="entry name" value="Cytochrome_b_N_euk/bac"/>
</dbReference>
<dbReference type="InterPro" id="IPR016174">
    <property type="entry name" value="Di-haem_cyt_TM"/>
</dbReference>
<dbReference type="PANTHER" id="PTHR19271">
    <property type="entry name" value="CYTOCHROME B"/>
    <property type="match status" value="1"/>
</dbReference>
<dbReference type="PANTHER" id="PTHR19271:SF16">
    <property type="entry name" value="CYTOCHROME B"/>
    <property type="match status" value="1"/>
</dbReference>
<dbReference type="Pfam" id="PF00032">
    <property type="entry name" value="Cytochrom_B_C"/>
    <property type="match status" value="1"/>
</dbReference>
<dbReference type="Pfam" id="PF00033">
    <property type="entry name" value="Cytochrome_B"/>
    <property type="match status" value="1"/>
</dbReference>
<dbReference type="PIRSF" id="PIRSF038885">
    <property type="entry name" value="COB"/>
    <property type="match status" value="1"/>
</dbReference>
<dbReference type="SUPFAM" id="SSF81648">
    <property type="entry name" value="a domain/subunit of cytochrome bc1 complex (Ubiquinol-cytochrome c reductase)"/>
    <property type="match status" value="1"/>
</dbReference>
<dbReference type="SUPFAM" id="SSF81342">
    <property type="entry name" value="Transmembrane di-heme cytochromes"/>
    <property type="match status" value="1"/>
</dbReference>
<dbReference type="PROSITE" id="PS51003">
    <property type="entry name" value="CYTB_CTER"/>
    <property type="match status" value="1"/>
</dbReference>
<dbReference type="PROSITE" id="PS51002">
    <property type="entry name" value="CYTB_NTER"/>
    <property type="match status" value="1"/>
</dbReference>
<protein>
    <recommendedName>
        <fullName>Cytochrome b</fullName>
    </recommendedName>
    <alternativeName>
        <fullName>Complex III subunit 3</fullName>
    </alternativeName>
    <alternativeName>
        <fullName>Complex III subunit III</fullName>
    </alternativeName>
    <alternativeName>
        <fullName>Cytochrome b-c1 complex subunit 3</fullName>
    </alternativeName>
    <alternativeName>
        <fullName>Ubiquinol-cytochrome-c reductase complex cytochrome b subunit</fullName>
    </alternativeName>
</protein>